<comment type="function">
    <text evidence="1 3">Appears to be essential for maintaining mitochondrial cristae formation and mitochondrial function by acting via YME1L1 in a kinase-independent manner to regulate essential mitochondrial structural proteins OPA1 and IMMT (By similarity). The action of this enzyme is not yet clear. It is not known if it has protein kinase activity and what type of substrate it would phosphorylate (Ser, Thr or Tyr) (Probable).</text>
</comment>
<comment type="subcellular location">
    <subcellularLocation>
        <location evidence="1">Mitochondrion</location>
    </subcellularLocation>
</comment>
<comment type="similarity">
    <text evidence="3">Belongs to the protein kinase superfamily. ADCK protein kinase family.</text>
</comment>
<sequence>MVRGIIRVVSLASVSLTSSGFFLYGTGHWDPSDFGVVRIGRAVLTTAAITWDYLTELRHVKAGTEEYESIKSQVHFRSAHRLLDLCCANRGTFIKVGQHLGALEYLVPPEYTKTLSVLHSQAPCTPFPDVVQVIREDLGKEISEVFVEFEEKPLGAASLAQVHRAVLQDGRKVAVKVQHPKVQAQSARDILLMEVLLHAVKKIFPQFEFMWLIEEAKKNLPLELDFENEGRNAEKMSAIVSSFSFLRIPRIYWELSTKRVLVMEYMEGGQVNDREYMKRNQIDINQVARALGQLYSEMIFVHGFVHCDPHPGNVLVRQNPETLVPEIILLDHGLYQVLTESFRLDYCSLWQALIAADMQQIRIYSQRLGAGELYPLFACMLTARSWESVNQGIYQNTVSREEALEIRSNAATYLPEISQLLASVPRQMLLLLKTNDLLRGIETSLGTHASSSSFLNMSRCCVRALARHRKEKTDSLWSYIHISLAETFSLGQLQIYEIVLRLQASCVGCWIRRMMQWVFLYIH</sequence>
<keyword id="KW-0067">ATP-binding</keyword>
<keyword id="KW-0418">Kinase</keyword>
<keyword id="KW-0496">Mitochondrion</keyword>
<keyword id="KW-0547">Nucleotide-binding</keyword>
<keyword id="KW-1185">Reference proteome</keyword>
<keyword id="KW-0723">Serine/threonine-protein kinase</keyword>
<keyword id="KW-0808">Transferase</keyword>
<keyword id="KW-0809">Transit peptide</keyword>
<gene>
    <name type="primary">adck1</name>
</gene>
<proteinExistence type="evidence at transcript level"/>
<reference key="1">
    <citation type="submission" date="2004-12" db="EMBL/GenBank/DDBJ databases">
        <authorList>
            <consortium name="NIH - Xenopus Gene Collection (XGC) project"/>
        </authorList>
    </citation>
    <scope>NUCLEOTIDE SEQUENCE [LARGE SCALE MRNA]</scope>
    <source>
        <tissue>Embryo</tissue>
    </source>
</reference>
<evidence type="ECO:0000250" key="1">
    <source>
        <dbReference type="UniProtKB" id="Q86TW2"/>
    </source>
</evidence>
<evidence type="ECO:0000255" key="2">
    <source>
        <dbReference type="PROSITE-ProRule" id="PRU00159"/>
    </source>
</evidence>
<evidence type="ECO:0000305" key="3"/>
<name>ADCK1_XENTR</name>
<accession>Q5M7P6</accession>
<dbReference type="EC" id="2.7.-.-" evidence="2"/>
<dbReference type="EMBL" id="BC088521">
    <property type="protein sequence ID" value="AAH88521.1"/>
    <property type="molecule type" value="mRNA"/>
</dbReference>
<dbReference type="RefSeq" id="NP_001011357.1">
    <property type="nucleotide sequence ID" value="NM_001011357.1"/>
</dbReference>
<dbReference type="RefSeq" id="XP_017951731.2">
    <property type="nucleotide sequence ID" value="XM_018096242.2"/>
</dbReference>
<dbReference type="SMR" id="Q5M7P6"/>
<dbReference type="FunCoup" id="Q5M7P6">
    <property type="interactions" value="1036"/>
</dbReference>
<dbReference type="STRING" id="8364.ENSXETP00000040888"/>
<dbReference type="PaxDb" id="8364-ENSXETP00000024217"/>
<dbReference type="DNASU" id="496824"/>
<dbReference type="GeneID" id="496824"/>
<dbReference type="KEGG" id="xtr:496824"/>
<dbReference type="AGR" id="Xenbase:XB-GENE-1006945"/>
<dbReference type="CTD" id="57143"/>
<dbReference type="Xenbase" id="XB-GENE-1006945">
    <property type="gene designation" value="adck1"/>
</dbReference>
<dbReference type="eggNOG" id="KOG1235">
    <property type="taxonomic scope" value="Eukaryota"/>
</dbReference>
<dbReference type="InParanoid" id="Q5M7P6"/>
<dbReference type="OMA" id="RCNPEDI"/>
<dbReference type="OrthoDB" id="427480at2759"/>
<dbReference type="Proteomes" id="UP000008143">
    <property type="component" value="Chromosome 8"/>
</dbReference>
<dbReference type="Bgee" id="ENSXETG00000011088">
    <property type="expression patterns" value="Expressed in neurula embryo and 13 other cell types or tissues"/>
</dbReference>
<dbReference type="GO" id="GO:0005739">
    <property type="term" value="C:mitochondrion"/>
    <property type="evidence" value="ECO:0007669"/>
    <property type="project" value="UniProtKB-SubCell"/>
</dbReference>
<dbReference type="GO" id="GO:0005524">
    <property type="term" value="F:ATP binding"/>
    <property type="evidence" value="ECO:0007669"/>
    <property type="project" value="UniProtKB-KW"/>
</dbReference>
<dbReference type="GO" id="GO:0004674">
    <property type="term" value="F:protein serine/threonine kinase activity"/>
    <property type="evidence" value="ECO:0007669"/>
    <property type="project" value="UniProtKB-KW"/>
</dbReference>
<dbReference type="CDD" id="cd13969">
    <property type="entry name" value="ADCK1-like"/>
    <property type="match status" value="1"/>
</dbReference>
<dbReference type="Gene3D" id="1.10.510.10">
    <property type="entry name" value="Transferase(Phosphotransferase) domain 1"/>
    <property type="match status" value="1"/>
</dbReference>
<dbReference type="InterPro" id="IPR004147">
    <property type="entry name" value="ABC1_dom"/>
</dbReference>
<dbReference type="InterPro" id="IPR045307">
    <property type="entry name" value="ADCK1_dom"/>
</dbReference>
<dbReference type="InterPro" id="IPR011009">
    <property type="entry name" value="Kinase-like_dom_sf"/>
</dbReference>
<dbReference type="InterPro" id="IPR051130">
    <property type="entry name" value="Mito_struct-func_regulator"/>
</dbReference>
<dbReference type="InterPro" id="IPR000719">
    <property type="entry name" value="Prot_kinase_dom"/>
</dbReference>
<dbReference type="PANTHER" id="PTHR43173:SF19">
    <property type="entry name" value="AARF DOMAIN-CONTAINING PROTEIN KINASE 1"/>
    <property type="match status" value="1"/>
</dbReference>
<dbReference type="PANTHER" id="PTHR43173">
    <property type="entry name" value="ABC1 FAMILY PROTEIN"/>
    <property type="match status" value="1"/>
</dbReference>
<dbReference type="Pfam" id="PF03109">
    <property type="entry name" value="ABC1"/>
    <property type="match status" value="1"/>
</dbReference>
<dbReference type="SMART" id="SM00220">
    <property type="entry name" value="S_TKc"/>
    <property type="match status" value="1"/>
</dbReference>
<dbReference type="SUPFAM" id="SSF56112">
    <property type="entry name" value="Protein kinase-like (PK-like)"/>
    <property type="match status" value="1"/>
</dbReference>
<dbReference type="PROSITE" id="PS50011">
    <property type="entry name" value="PROTEIN_KINASE_DOM"/>
    <property type="match status" value="1"/>
</dbReference>
<protein>
    <recommendedName>
        <fullName evidence="1">AarF domain-containing protein kinase 1</fullName>
        <ecNumber evidence="2">2.7.-.-</ecNumber>
    </recommendedName>
</protein>
<organism>
    <name type="scientific">Xenopus tropicalis</name>
    <name type="common">Western clawed frog</name>
    <name type="synonym">Silurana tropicalis</name>
    <dbReference type="NCBI Taxonomy" id="8364"/>
    <lineage>
        <taxon>Eukaryota</taxon>
        <taxon>Metazoa</taxon>
        <taxon>Chordata</taxon>
        <taxon>Craniata</taxon>
        <taxon>Vertebrata</taxon>
        <taxon>Euteleostomi</taxon>
        <taxon>Amphibia</taxon>
        <taxon>Batrachia</taxon>
        <taxon>Anura</taxon>
        <taxon>Pipoidea</taxon>
        <taxon>Pipidae</taxon>
        <taxon>Xenopodinae</taxon>
        <taxon>Xenopus</taxon>
        <taxon>Silurana</taxon>
    </lineage>
</organism>
<feature type="transit peptide" description="Mitochondrion" evidence="3">
    <location>
        <begin position="1"/>
        <end status="unknown"/>
    </location>
</feature>
<feature type="chain" id="PRO_0000252253" description="AarF domain-containing protein kinase 1">
    <location>
        <begin status="unknown"/>
        <end position="523"/>
    </location>
</feature>
<feature type="domain" description="Protein kinase" evidence="2">
    <location>
        <begin position="148"/>
        <end position="484"/>
    </location>
</feature>
<feature type="active site" description="Proton acceptor" evidence="2">
    <location>
        <position position="308"/>
    </location>
</feature>
<feature type="binding site" evidence="2">
    <location>
        <begin position="154"/>
        <end position="162"/>
    </location>
    <ligand>
        <name>ATP</name>
        <dbReference type="ChEBI" id="CHEBI:30616"/>
    </ligand>
</feature>
<feature type="binding site" evidence="2">
    <location>
        <position position="176"/>
    </location>
    <ligand>
        <name>ATP</name>
        <dbReference type="ChEBI" id="CHEBI:30616"/>
    </ligand>
</feature>